<accession>Q1LU20</accession>
<gene>
    <name evidence="1" type="primary">ligA</name>
    <name type="ordered locus">BCI_0066</name>
</gene>
<organism>
    <name type="scientific">Baumannia cicadellinicola subsp. Homalodisca coagulata</name>
    <dbReference type="NCBI Taxonomy" id="374463"/>
    <lineage>
        <taxon>Bacteria</taxon>
        <taxon>Pseudomonadati</taxon>
        <taxon>Pseudomonadota</taxon>
        <taxon>Gammaproteobacteria</taxon>
        <taxon>Candidatus Palibaumannia</taxon>
    </lineage>
</organism>
<dbReference type="EC" id="6.5.1.2" evidence="1"/>
<dbReference type="EMBL" id="CP000238">
    <property type="protein sequence ID" value="ABF14158.1"/>
    <property type="molecule type" value="Genomic_DNA"/>
</dbReference>
<dbReference type="RefSeq" id="WP_011520277.1">
    <property type="nucleotide sequence ID" value="NC_007984.1"/>
</dbReference>
<dbReference type="SMR" id="Q1LU20"/>
<dbReference type="STRING" id="374463.BCI_0066"/>
<dbReference type="KEGG" id="bci:BCI_0066"/>
<dbReference type="HOGENOM" id="CLU_007764_2_1_6"/>
<dbReference type="OrthoDB" id="9759736at2"/>
<dbReference type="Proteomes" id="UP000002427">
    <property type="component" value="Chromosome"/>
</dbReference>
<dbReference type="GO" id="GO:0005829">
    <property type="term" value="C:cytosol"/>
    <property type="evidence" value="ECO:0007669"/>
    <property type="project" value="TreeGrafter"/>
</dbReference>
<dbReference type="GO" id="GO:0003677">
    <property type="term" value="F:DNA binding"/>
    <property type="evidence" value="ECO:0007669"/>
    <property type="project" value="InterPro"/>
</dbReference>
<dbReference type="GO" id="GO:0003911">
    <property type="term" value="F:DNA ligase (NAD+) activity"/>
    <property type="evidence" value="ECO:0007669"/>
    <property type="project" value="UniProtKB-UniRule"/>
</dbReference>
<dbReference type="GO" id="GO:0046872">
    <property type="term" value="F:metal ion binding"/>
    <property type="evidence" value="ECO:0007669"/>
    <property type="project" value="UniProtKB-KW"/>
</dbReference>
<dbReference type="GO" id="GO:0006281">
    <property type="term" value="P:DNA repair"/>
    <property type="evidence" value="ECO:0007669"/>
    <property type="project" value="UniProtKB-KW"/>
</dbReference>
<dbReference type="GO" id="GO:0006260">
    <property type="term" value="P:DNA replication"/>
    <property type="evidence" value="ECO:0007669"/>
    <property type="project" value="UniProtKB-KW"/>
</dbReference>
<dbReference type="CDD" id="cd17748">
    <property type="entry name" value="BRCT_DNA_ligase_like"/>
    <property type="match status" value="1"/>
</dbReference>
<dbReference type="CDD" id="cd00114">
    <property type="entry name" value="LIGANc"/>
    <property type="match status" value="1"/>
</dbReference>
<dbReference type="FunFam" id="1.10.150.20:FF:000006">
    <property type="entry name" value="DNA ligase"/>
    <property type="match status" value="1"/>
</dbReference>
<dbReference type="FunFam" id="1.10.150.20:FF:000007">
    <property type="entry name" value="DNA ligase"/>
    <property type="match status" value="1"/>
</dbReference>
<dbReference type="FunFam" id="2.40.50.140:FF:000012">
    <property type="entry name" value="DNA ligase"/>
    <property type="match status" value="1"/>
</dbReference>
<dbReference type="FunFam" id="3.30.470.30:FF:000001">
    <property type="entry name" value="DNA ligase"/>
    <property type="match status" value="1"/>
</dbReference>
<dbReference type="Gene3D" id="6.20.10.30">
    <property type="match status" value="1"/>
</dbReference>
<dbReference type="Gene3D" id="1.10.150.20">
    <property type="entry name" value="5' to 3' exonuclease, C-terminal subdomain"/>
    <property type="match status" value="2"/>
</dbReference>
<dbReference type="Gene3D" id="3.40.50.10190">
    <property type="entry name" value="BRCT domain"/>
    <property type="match status" value="1"/>
</dbReference>
<dbReference type="Gene3D" id="3.30.470.30">
    <property type="entry name" value="DNA ligase/mRNA capping enzyme"/>
    <property type="match status" value="1"/>
</dbReference>
<dbReference type="Gene3D" id="1.10.287.610">
    <property type="entry name" value="Helix hairpin bin"/>
    <property type="match status" value="1"/>
</dbReference>
<dbReference type="Gene3D" id="2.40.50.140">
    <property type="entry name" value="Nucleic acid-binding proteins"/>
    <property type="match status" value="1"/>
</dbReference>
<dbReference type="HAMAP" id="MF_01588">
    <property type="entry name" value="DNA_ligase_A"/>
    <property type="match status" value="1"/>
</dbReference>
<dbReference type="InterPro" id="IPR001357">
    <property type="entry name" value="BRCT_dom"/>
</dbReference>
<dbReference type="InterPro" id="IPR036420">
    <property type="entry name" value="BRCT_dom_sf"/>
</dbReference>
<dbReference type="InterPro" id="IPR041663">
    <property type="entry name" value="DisA/LigA_HHH"/>
</dbReference>
<dbReference type="InterPro" id="IPR001679">
    <property type="entry name" value="DNA_ligase"/>
</dbReference>
<dbReference type="InterPro" id="IPR018239">
    <property type="entry name" value="DNA_ligase_AS"/>
</dbReference>
<dbReference type="InterPro" id="IPR033136">
    <property type="entry name" value="DNA_ligase_CS"/>
</dbReference>
<dbReference type="InterPro" id="IPR013839">
    <property type="entry name" value="DNAligase_adenylation"/>
</dbReference>
<dbReference type="InterPro" id="IPR013840">
    <property type="entry name" value="DNAligase_N"/>
</dbReference>
<dbReference type="InterPro" id="IPR003583">
    <property type="entry name" value="Hlx-hairpin-Hlx_DNA-bd_motif"/>
</dbReference>
<dbReference type="InterPro" id="IPR012340">
    <property type="entry name" value="NA-bd_OB-fold"/>
</dbReference>
<dbReference type="InterPro" id="IPR004150">
    <property type="entry name" value="NAD_DNA_ligase_OB"/>
</dbReference>
<dbReference type="InterPro" id="IPR010994">
    <property type="entry name" value="RuvA_2-like"/>
</dbReference>
<dbReference type="NCBIfam" id="TIGR00575">
    <property type="entry name" value="dnlj"/>
    <property type="match status" value="1"/>
</dbReference>
<dbReference type="NCBIfam" id="NF005932">
    <property type="entry name" value="PRK07956.1"/>
    <property type="match status" value="1"/>
</dbReference>
<dbReference type="PANTHER" id="PTHR23389">
    <property type="entry name" value="CHROMOSOME TRANSMISSION FIDELITY FACTOR 18"/>
    <property type="match status" value="1"/>
</dbReference>
<dbReference type="PANTHER" id="PTHR23389:SF9">
    <property type="entry name" value="DNA LIGASE"/>
    <property type="match status" value="1"/>
</dbReference>
<dbReference type="Pfam" id="PF00533">
    <property type="entry name" value="BRCT"/>
    <property type="match status" value="1"/>
</dbReference>
<dbReference type="Pfam" id="PF01653">
    <property type="entry name" value="DNA_ligase_aden"/>
    <property type="match status" value="1"/>
</dbReference>
<dbReference type="Pfam" id="PF03120">
    <property type="entry name" value="DNA_ligase_OB"/>
    <property type="match status" value="1"/>
</dbReference>
<dbReference type="Pfam" id="PF12826">
    <property type="entry name" value="HHH_2"/>
    <property type="match status" value="1"/>
</dbReference>
<dbReference type="Pfam" id="PF22745">
    <property type="entry name" value="Nlig-Ia"/>
    <property type="match status" value="1"/>
</dbReference>
<dbReference type="PIRSF" id="PIRSF001604">
    <property type="entry name" value="LigA"/>
    <property type="match status" value="1"/>
</dbReference>
<dbReference type="SMART" id="SM00292">
    <property type="entry name" value="BRCT"/>
    <property type="match status" value="1"/>
</dbReference>
<dbReference type="SMART" id="SM00278">
    <property type="entry name" value="HhH1"/>
    <property type="match status" value="4"/>
</dbReference>
<dbReference type="SMART" id="SM00532">
    <property type="entry name" value="LIGANc"/>
    <property type="match status" value="1"/>
</dbReference>
<dbReference type="SUPFAM" id="SSF52113">
    <property type="entry name" value="BRCT domain"/>
    <property type="match status" value="1"/>
</dbReference>
<dbReference type="SUPFAM" id="SSF56091">
    <property type="entry name" value="DNA ligase/mRNA capping enzyme, catalytic domain"/>
    <property type="match status" value="1"/>
</dbReference>
<dbReference type="SUPFAM" id="SSF50249">
    <property type="entry name" value="Nucleic acid-binding proteins"/>
    <property type="match status" value="1"/>
</dbReference>
<dbReference type="SUPFAM" id="SSF47781">
    <property type="entry name" value="RuvA domain 2-like"/>
    <property type="match status" value="1"/>
</dbReference>
<dbReference type="PROSITE" id="PS50172">
    <property type="entry name" value="BRCT"/>
    <property type="match status" value="1"/>
</dbReference>
<dbReference type="PROSITE" id="PS01055">
    <property type="entry name" value="DNA_LIGASE_N1"/>
    <property type="match status" value="1"/>
</dbReference>
<dbReference type="PROSITE" id="PS01056">
    <property type="entry name" value="DNA_LIGASE_N2"/>
    <property type="match status" value="1"/>
</dbReference>
<proteinExistence type="inferred from homology"/>
<reference key="1">
    <citation type="journal article" date="2006" name="PLoS Biol.">
        <title>Metabolic complementarity and genomics of the dual bacterial symbiosis of sharpshooters.</title>
        <authorList>
            <person name="Wu D."/>
            <person name="Daugherty S.C."/>
            <person name="Van Aken S.E."/>
            <person name="Pai G.H."/>
            <person name="Watkins K.L."/>
            <person name="Khouri H."/>
            <person name="Tallon L.J."/>
            <person name="Zaborsky J.M."/>
            <person name="Dunbar H.E."/>
            <person name="Tran P.L."/>
            <person name="Moran N.A."/>
            <person name="Eisen J.A."/>
        </authorList>
    </citation>
    <scope>NUCLEOTIDE SEQUENCE [LARGE SCALE GENOMIC DNA]</scope>
</reference>
<evidence type="ECO:0000255" key="1">
    <source>
        <dbReference type="HAMAP-Rule" id="MF_01588"/>
    </source>
</evidence>
<name>DNLJ_BAUCH</name>
<keyword id="KW-0227">DNA damage</keyword>
<keyword id="KW-0234">DNA repair</keyword>
<keyword id="KW-0235">DNA replication</keyword>
<keyword id="KW-0436">Ligase</keyword>
<keyword id="KW-0460">Magnesium</keyword>
<keyword id="KW-0464">Manganese</keyword>
<keyword id="KW-0479">Metal-binding</keyword>
<keyword id="KW-0520">NAD</keyword>
<keyword id="KW-1185">Reference proteome</keyword>
<keyword id="KW-0862">Zinc</keyword>
<feature type="chain" id="PRO_0000313137" description="DNA ligase">
    <location>
        <begin position="1"/>
        <end position="671"/>
    </location>
</feature>
<feature type="domain" description="BRCT" evidence="1">
    <location>
        <begin position="592"/>
        <end position="671"/>
    </location>
</feature>
<feature type="active site" description="N6-AMP-lysine intermediate" evidence="1">
    <location>
        <position position="116"/>
    </location>
</feature>
<feature type="binding site" evidence="1">
    <location>
        <begin position="32"/>
        <end position="36"/>
    </location>
    <ligand>
        <name>NAD(+)</name>
        <dbReference type="ChEBI" id="CHEBI:57540"/>
    </ligand>
</feature>
<feature type="binding site" evidence="1">
    <location>
        <begin position="81"/>
        <end position="82"/>
    </location>
    <ligand>
        <name>NAD(+)</name>
        <dbReference type="ChEBI" id="CHEBI:57540"/>
    </ligand>
</feature>
<feature type="binding site" evidence="1">
    <location>
        <position position="114"/>
    </location>
    <ligand>
        <name>NAD(+)</name>
        <dbReference type="ChEBI" id="CHEBI:57540"/>
    </ligand>
</feature>
<feature type="binding site" evidence="1">
    <location>
        <position position="137"/>
    </location>
    <ligand>
        <name>NAD(+)</name>
        <dbReference type="ChEBI" id="CHEBI:57540"/>
    </ligand>
</feature>
<feature type="binding site" evidence="1">
    <location>
        <position position="175"/>
    </location>
    <ligand>
        <name>NAD(+)</name>
        <dbReference type="ChEBI" id="CHEBI:57540"/>
    </ligand>
</feature>
<feature type="binding site" evidence="1">
    <location>
        <position position="292"/>
    </location>
    <ligand>
        <name>NAD(+)</name>
        <dbReference type="ChEBI" id="CHEBI:57540"/>
    </ligand>
</feature>
<feature type="binding site" evidence="1">
    <location>
        <position position="316"/>
    </location>
    <ligand>
        <name>NAD(+)</name>
        <dbReference type="ChEBI" id="CHEBI:57540"/>
    </ligand>
</feature>
<feature type="binding site" evidence="1">
    <location>
        <position position="410"/>
    </location>
    <ligand>
        <name>Zn(2+)</name>
        <dbReference type="ChEBI" id="CHEBI:29105"/>
    </ligand>
</feature>
<feature type="binding site" evidence="1">
    <location>
        <position position="413"/>
    </location>
    <ligand>
        <name>Zn(2+)</name>
        <dbReference type="ChEBI" id="CHEBI:29105"/>
    </ligand>
</feature>
<feature type="binding site" evidence="1">
    <location>
        <position position="428"/>
    </location>
    <ligand>
        <name>Zn(2+)</name>
        <dbReference type="ChEBI" id="CHEBI:29105"/>
    </ligand>
</feature>
<feature type="binding site" evidence="1">
    <location>
        <position position="434"/>
    </location>
    <ligand>
        <name>Zn(2+)</name>
        <dbReference type="ChEBI" id="CHEBI:29105"/>
    </ligand>
</feature>
<protein>
    <recommendedName>
        <fullName evidence="1">DNA ligase</fullName>
        <ecNumber evidence="1">6.5.1.2</ecNumber>
    </recommendedName>
    <alternativeName>
        <fullName evidence="1">Polydeoxyribonucleotide synthase [NAD(+)]</fullName>
    </alternativeName>
</protein>
<sequence length="671" mass="76271">MKQIEQYIEQLRQQLRYWNFLYYAKDAPEVSDVEYDWLMMKLRELERQWPDLKTADSPTQHIGYKAQSKFRKVIHEVPMLSLDHIFNDTSFLAFDRRIRNRLQYGNNYLTYCCELKFDGIAVSLLYKHGKLIRAATRGDGHIGEDVTDNIRTICSIPLQLKDDGHIPRLIEIRGEVIMSEDAFRHLNETAKKNKSKRFANPRNAAAGSLRQVDPSITATRLLSFFCYGVGRIDSKKIPAAHLELLQQFKIWGLPVSNYRRYCVGHQEVLDFYSYVSKVRSKLGFNIDGIVIKVNALVQQQQLGFVARAPRWAIAYKLPANEQLTEIQNIDFQVGRTGIITPVARLKPVYISGAYISNASLHSFAEIKRLGLRIGDTVVIRLAGNIIPQIVNVVVSKRSIKTSPVLYPLYCPVCGSKVKQNNKEKTIICTAGMICSAQLKEALKHFVSRRAMNIYGMGGKIIDQLVDLKIIQNPVDLFRLNQDQLTCLKNMGQKKTKKLLDAIEYAKKTTFARFLYAIGIREIGETKAAYLADYYKHIDALMAADIESLTKIQDIGIIVATNVLNFFHNKHNIAIIEELCSPKIGIKFLSTLEKNNYFSGKNIVFTGTLAFLSREEAIDMLIALGARIRSSVSSKIDLLIAGKNTGFKLTKAKQLQIKIIEEAEFYQILGIR</sequence>
<comment type="function">
    <text evidence="1">DNA ligase that catalyzes the formation of phosphodiester linkages between 5'-phosphoryl and 3'-hydroxyl groups in double-stranded DNA using NAD as a coenzyme and as the energy source for the reaction. It is essential for DNA replication and repair of damaged DNA.</text>
</comment>
<comment type="catalytic activity">
    <reaction evidence="1">
        <text>NAD(+) + (deoxyribonucleotide)n-3'-hydroxyl + 5'-phospho-(deoxyribonucleotide)m = (deoxyribonucleotide)n+m + AMP + beta-nicotinamide D-nucleotide.</text>
        <dbReference type="EC" id="6.5.1.2"/>
    </reaction>
</comment>
<comment type="cofactor">
    <cofactor evidence="1">
        <name>Mg(2+)</name>
        <dbReference type="ChEBI" id="CHEBI:18420"/>
    </cofactor>
    <cofactor evidence="1">
        <name>Mn(2+)</name>
        <dbReference type="ChEBI" id="CHEBI:29035"/>
    </cofactor>
</comment>
<comment type="similarity">
    <text evidence="1">Belongs to the NAD-dependent DNA ligase family. LigA subfamily.</text>
</comment>